<reference key="1">
    <citation type="journal article" date="2004" name="Mol. Phylogenet. Evol.">
        <title>Myostatin rapid sequence evolution in ruminants predates domestication.</title>
        <authorList>
            <person name="Tellgren S."/>
            <person name="Berglund A.C."/>
            <person name="Savolainen P."/>
            <person name="Janis C.M."/>
            <person name="Liberles D.A."/>
        </authorList>
    </citation>
    <scope>NUCLEOTIDE SEQUENCE [MRNA]</scope>
</reference>
<evidence type="ECO:0000250" key="1">
    <source>
        <dbReference type="UniProtKB" id="O08689"/>
    </source>
</evidence>
<evidence type="ECO:0000250" key="2">
    <source>
        <dbReference type="UniProtKB" id="O14793"/>
    </source>
</evidence>
<evidence type="ECO:0000255" key="3"/>
<evidence type="ECO:0000305" key="4"/>
<proteinExistence type="evidence at transcript level"/>
<accession>Q5USW0</accession>
<dbReference type="EMBL" id="AY629304">
    <property type="protein sequence ID" value="AAT40568.1"/>
    <property type="molecule type" value="mRNA"/>
</dbReference>
<dbReference type="SMR" id="Q5USW0"/>
<dbReference type="GlyCosmos" id="Q5USW0">
    <property type="glycosylation" value="2 sites, No reported glycans"/>
</dbReference>
<dbReference type="GO" id="GO:0005615">
    <property type="term" value="C:extracellular space"/>
    <property type="evidence" value="ECO:0007669"/>
    <property type="project" value="UniProtKB-KW"/>
</dbReference>
<dbReference type="GO" id="GO:0005125">
    <property type="term" value="F:cytokine activity"/>
    <property type="evidence" value="ECO:0007669"/>
    <property type="project" value="UniProtKB-KW"/>
</dbReference>
<dbReference type="GO" id="GO:0008083">
    <property type="term" value="F:growth factor activity"/>
    <property type="evidence" value="ECO:0007669"/>
    <property type="project" value="UniProtKB-KW"/>
</dbReference>
<dbReference type="GO" id="GO:0008201">
    <property type="term" value="F:heparin binding"/>
    <property type="evidence" value="ECO:0007669"/>
    <property type="project" value="UniProtKB-KW"/>
</dbReference>
<dbReference type="GO" id="GO:0042802">
    <property type="term" value="F:identical protein binding"/>
    <property type="evidence" value="ECO:0000250"/>
    <property type="project" value="UniProtKB"/>
</dbReference>
<dbReference type="GO" id="GO:0014839">
    <property type="term" value="P:myoblast migration involved in skeletal muscle regeneration"/>
    <property type="evidence" value="ECO:0000250"/>
    <property type="project" value="UniProtKB"/>
</dbReference>
<dbReference type="GO" id="GO:0010592">
    <property type="term" value="P:positive regulation of lamellipodium assembly"/>
    <property type="evidence" value="ECO:0000250"/>
    <property type="project" value="UniProtKB"/>
</dbReference>
<dbReference type="GO" id="GO:0010759">
    <property type="term" value="P:positive regulation of macrophage chemotaxis"/>
    <property type="evidence" value="ECO:0000250"/>
    <property type="project" value="UniProtKB"/>
</dbReference>
<dbReference type="CDD" id="cd19388">
    <property type="entry name" value="TGF_beta_GDF8"/>
    <property type="match status" value="1"/>
</dbReference>
<dbReference type="FunFam" id="2.60.120.970:FF:000001">
    <property type="entry name" value="Growth/differentiation factor 8"/>
    <property type="match status" value="1"/>
</dbReference>
<dbReference type="FunFam" id="2.10.90.10:FF:000006">
    <property type="entry name" value="growth/differentiation factor 8"/>
    <property type="match status" value="1"/>
</dbReference>
<dbReference type="Gene3D" id="2.60.120.970">
    <property type="match status" value="1"/>
</dbReference>
<dbReference type="Gene3D" id="2.10.90.10">
    <property type="entry name" value="Cystine-knot cytokines"/>
    <property type="match status" value="1"/>
</dbReference>
<dbReference type="InterPro" id="IPR029034">
    <property type="entry name" value="Cystine-knot_cytokine"/>
</dbReference>
<dbReference type="InterPro" id="IPR001839">
    <property type="entry name" value="TGF-b_C"/>
</dbReference>
<dbReference type="InterPro" id="IPR001111">
    <property type="entry name" value="TGF-b_propeptide"/>
</dbReference>
<dbReference type="InterPro" id="IPR015615">
    <property type="entry name" value="TGF-beta-rel"/>
</dbReference>
<dbReference type="InterPro" id="IPR017948">
    <property type="entry name" value="TGFb_CS"/>
</dbReference>
<dbReference type="PANTHER" id="PTHR11848:SF150">
    <property type="entry name" value="GROWTH_DIFFERENTIATION FACTOR 8"/>
    <property type="match status" value="1"/>
</dbReference>
<dbReference type="PANTHER" id="PTHR11848">
    <property type="entry name" value="TGF-BETA FAMILY"/>
    <property type="match status" value="1"/>
</dbReference>
<dbReference type="Pfam" id="PF00019">
    <property type="entry name" value="TGF_beta"/>
    <property type="match status" value="1"/>
</dbReference>
<dbReference type="Pfam" id="PF00688">
    <property type="entry name" value="TGFb_propeptide"/>
    <property type="match status" value="1"/>
</dbReference>
<dbReference type="SMART" id="SM00204">
    <property type="entry name" value="TGFB"/>
    <property type="match status" value="1"/>
</dbReference>
<dbReference type="SUPFAM" id="SSF57501">
    <property type="entry name" value="Cystine-knot cytokines"/>
    <property type="match status" value="1"/>
</dbReference>
<dbReference type="PROSITE" id="PS00250">
    <property type="entry name" value="TGF_BETA_1"/>
    <property type="match status" value="1"/>
</dbReference>
<dbReference type="PROSITE" id="PS51362">
    <property type="entry name" value="TGF_BETA_2"/>
    <property type="match status" value="1"/>
</dbReference>
<sequence length="375" mass="42487">MQKLQISVYIYLFMLIVAGPVDLNEKSEQKENVEKEGLCNACLWRENTTSSRLEAIKIQILSKLRLETAPNISKDAIRQLLPKAPPLLELIDQFDVQGDASSDGSLEDDDYHARTETVITMPTESDLLTQVEGKPKCCFFKFSSKIQYNKLVKAQLWIYLRPVKTPTTVFAQILRLIKPMKDGTRYTGIRSLKLDMNPGTGIWQSIDVKTVLQNWLKQPESNLGIEIKALDENGRDLAVTFPEPGEDGLTPFLEVKVTDTPKRSRRDFGLDCDEHSTESRCCRYPLTVDFEAFGWDWIIAPKRYKANYCSGECEFVFLQKYPHTHLVHQANPRGSAGPCCTPTKMSPINMLYFNGEGQIIYGKIPAMVVDRCGCS</sequence>
<name>GDF8_TAUDE</name>
<protein>
    <recommendedName>
        <fullName>Growth/differentiation factor 8</fullName>
        <shortName>GDF-8</shortName>
    </recommendedName>
    <alternativeName>
        <fullName>Myostatin</fullName>
    </alternativeName>
</protein>
<gene>
    <name type="primary">MSTN</name>
    <name type="synonym">GDF8</name>
</gene>
<feature type="signal peptide" evidence="3">
    <location>
        <begin position="1"/>
        <end position="18"/>
    </location>
</feature>
<feature type="propeptide" id="PRO_0000033968" evidence="3">
    <location>
        <begin position="19"/>
        <end position="266"/>
    </location>
</feature>
<feature type="chain" id="PRO_0000033969" description="Growth/differentiation factor 8">
    <location>
        <begin position="267"/>
        <end position="375"/>
    </location>
</feature>
<feature type="glycosylation site" description="N-linked (GlcNAc...) asparagine" evidence="3">
    <location>
        <position position="47"/>
    </location>
</feature>
<feature type="glycosylation site" description="N-linked (GlcNAc...) asparagine" evidence="3">
    <location>
        <position position="71"/>
    </location>
</feature>
<feature type="disulfide bond" evidence="2">
    <location>
        <begin position="272"/>
        <end position="282"/>
    </location>
</feature>
<feature type="disulfide bond" evidence="2">
    <location>
        <begin position="281"/>
        <end position="340"/>
    </location>
</feature>
<feature type="disulfide bond" evidence="2">
    <location>
        <begin position="309"/>
        <end position="372"/>
    </location>
</feature>
<feature type="disulfide bond" evidence="2">
    <location>
        <begin position="313"/>
        <end position="374"/>
    </location>
</feature>
<feature type="disulfide bond" description="Interchain" evidence="2">
    <location>
        <position position="339"/>
    </location>
</feature>
<comment type="function">
    <text evidence="1">Acts specifically as a negative regulator of skeletal muscle growth.</text>
</comment>
<comment type="subunit">
    <text evidence="1">Homodimer; disulfide-linked. Interacts with WFIKKN2, leading to inhibit its activity. Interacts with FSTL3.</text>
</comment>
<comment type="subcellular location">
    <subcellularLocation>
        <location evidence="1">Secreted</location>
    </subcellularLocation>
</comment>
<comment type="PTM">
    <text evidence="1">Synthesized as large precursor molecule that undergoes proteolytic cleavage to generate an N-terminal propeptide and a disulfide linked C-terminal dimer, which is the biologically active molecule. The circulating form consists of a latent complex of the C-terminal dimer and other proteins, including its propeptide, which maintain the C-terminal dimer in a latent, inactive state. Ligand activation requires additional cleavage of the prodomain by a tolloid-like metalloproteinase.</text>
</comment>
<comment type="similarity">
    <text evidence="4">Belongs to the TGF-beta family.</text>
</comment>
<keyword id="KW-0165">Cleavage on pair of basic residues</keyword>
<keyword id="KW-0202">Cytokine</keyword>
<keyword id="KW-1015">Disulfide bond</keyword>
<keyword id="KW-0325">Glycoprotein</keyword>
<keyword id="KW-0339">Growth factor</keyword>
<keyword id="KW-0358">Heparin-binding</keyword>
<keyword id="KW-0964">Secreted</keyword>
<keyword id="KW-0732">Signal</keyword>
<organism>
    <name type="scientific">Taurotragus derbianus</name>
    <name type="common">Giant eland</name>
    <name type="synonym">Derby eland</name>
    <dbReference type="NCBI Taxonomy" id="303930"/>
    <lineage>
        <taxon>Eukaryota</taxon>
        <taxon>Metazoa</taxon>
        <taxon>Chordata</taxon>
        <taxon>Craniata</taxon>
        <taxon>Vertebrata</taxon>
        <taxon>Euteleostomi</taxon>
        <taxon>Mammalia</taxon>
        <taxon>Eutheria</taxon>
        <taxon>Laurasiatheria</taxon>
        <taxon>Artiodactyla</taxon>
        <taxon>Ruminantia</taxon>
        <taxon>Pecora</taxon>
        <taxon>Bovidae</taxon>
        <taxon>Bovinae</taxon>
        <taxon>Taurotragus</taxon>
    </lineage>
</organism>